<sequence>MKKIPRIGVGGPVGSGKTAIIEAVVPILIKLGYRILVITNDIVTTEDAKHVQRTLKGVLIEDRIVGVETGGCPHTAVREDPSMNLAAVEEMEAKFPDTDLVLLESGGDNLTLTFSPALIDFFIYVIDVAAGDKIPRKNGPGISQSDILVINKTDLAPYVGASLQVMDDDSRMMRGKKPFVFTNCKTNEGIDDLVHLIRENVLFDTEVSKESA</sequence>
<protein>
    <recommendedName>
        <fullName evidence="1">Urease accessory protein UreG 2</fullName>
    </recommendedName>
</protein>
<reference key="1">
    <citation type="submission" date="2007-10" db="EMBL/GenBank/DDBJ databases">
        <title>Brucella canis ATCC 23365 whole genome shotgun sequencing project.</title>
        <authorList>
            <person name="Setubal J.C."/>
            <person name="Bowns C."/>
            <person name="Boyle S."/>
            <person name="Crasta O.R."/>
            <person name="Czar M.J."/>
            <person name="Dharmanolla C."/>
            <person name="Gillespie J.J."/>
            <person name="Kenyon R.W."/>
            <person name="Lu J."/>
            <person name="Mane S."/>
            <person name="Mohapatra S."/>
            <person name="Nagrani S."/>
            <person name="Purkayastha A."/>
            <person name="Rajasimha H.K."/>
            <person name="Shallom J.M."/>
            <person name="Shallom S."/>
            <person name="Shukla M."/>
            <person name="Snyder E.E."/>
            <person name="Sobral B.W."/>
            <person name="Wattam A.R."/>
            <person name="Will R."/>
            <person name="Williams K."/>
            <person name="Yoo H."/>
            <person name="Bruce D."/>
            <person name="Detter C."/>
            <person name="Munk C."/>
            <person name="Brettin T.S."/>
        </authorList>
    </citation>
    <scope>NUCLEOTIDE SEQUENCE [LARGE SCALE GENOMIC DNA]</scope>
    <source>
        <strain>ATCC 23365 / NCTC 10854 / RM-666</strain>
    </source>
</reference>
<name>UREG2_BRUC2</name>
<keyword id="KW-0143">Chaperone</keyword>
<keyword id="KW-0963">Cytoplasm</keyword>
<keyword id="KW-0342">GTP-binding</keyword>
<keyword id="KW-0996">Nickel insertion</keyword>
<keyword id="KW-0547">Nucleotide-binding</keyword>
<keyword id="KW-1185">Reference proteome</keyword>
<accession>A9M617</accession>
<dbReference type="EMBL" id="CP000872">
    <property type="protein sequence ID" value="ABX62422.1"/>
    <property type="molecule type" value="Genomic_DNA"/>
</dbReference>
<dbReference type="SMR" id="A9M617"/>
<dbReference type="KEGG" id="bcs:BCAN_A1388"/>
<dbReference type="HOGENOM" id="CLU_072144_1_0_5"/>
<dbReference type="PhylomeDB" id="A9M617"/>
<dbReference type="Proteomes" id="UP000001385">
    <property type="component" value="Chromosome I"/>
</dbReference>
<dbReference type="GO" id="GO:0005737">
    <property type="term" value="C:cytoplasm"/>
    <property type="evidence" value="ECO:0007669"/>
    <property type="project" value="UniProtKB-SubCell"/>
</dbReference>
<dbReference type="GO" id="GO:0005525">
    <property type="term" value="F:GTP binding"/>
    <property type="evidence" value="ECO:0007669"/>
    <property type="project" value="UniProtKB-KW"/>
</dbReference>
<dbReference type="GO" id="GO:0003924">
    <property type="term" value="F:GTPase activity"/>
    <property type="evidence" value="ECO:0007669"/>
    <property type="project" value="InterPro"/>
</dbReference>
<dbReference type="GO" id="GO:0016151">
    <property type="term" value="F:nickel cation binding"/>
    <property type="evidence" value="ECO:0007669"/>
    <property type="project" value="UniProtKB-UniRule"/>
</dbReference>
<dbReference type="GO" id="GO:0043419">
    <property type="term" value="P:urea catabolic process"/>
    <property type="evidence" value="ECO:0007669"/>
    <property type="project" value="InterPro"/>
</dbReference>
<dbReference type="CDD" id="cd05540">
    <property type="entry name" value="UreG"/>
    <property type="match status" value="1"/>
</dbReference>
<dbReference type="Gene3D" id="3.40.50.300">
    <property type="entry name" value="P-loop containing nucleotide triphosphate hydrolases"/>
    <property type="match status" value="1"/>
</dbReference>
<dbReference type="HAMAP" id="MF_01389">
    <property type="entry name" value="UreG"/>
    <property type="match status" value="1"/>
</dbReference>
<dbReference type="InterPro" id="IPR003495">
    <property type="entry name" value="CobW/HypB/UreG_nucleotide-bd"/>
</dbReference>
<dbReference type="InterPro" id="IPR027417">
    <property type="entry name" value="P-loop_NTPase"/>
</dbReference>
<dbReference type="InterPro" id="IPR004400">
    <property type="entry name" value="UreG"/>
</dbReference>
<dbReference type="NCBIfam" id="TIGR00101">
    <property type="entry name" value="ureG"/>
    <property type="match status" value="1"/>
</dbReference>
<dbReference type="PANTHER" id="PTHR31715">
    <property type="entry name" value="UREASE ACCESSORY PROTEIN G"/>
    <property type="match status" value="1"/>
</dbReference>
<dbReference type="PANTHER" id="PTHR31715:SF0">
    <property type="entry name" value="UREASE ACCESSORY PROTEIN G"/>
    <property type="match status" value="1"/>
</dbReference>
<dbReference type="Pfam" id="PF02492">
    <property type="entry name" value="cobW"/>
    <property type="match status" value="1"/>
</dbReference>
<dbReference type="PIRSF" id="PIRSF005624">
    <property type="entry name" value="Ni-bind_GTPase"/>
    <property type="match status" value="1"/>
</dbReference>
<dbReference type="SUPFAM" id="SSF52540">
    <property type="entry name" value="P-loop containing nucleoside triphosphate hydrolases"/>
    <property type="match status" value="1"/>
</dbReference>
<evidence type="ECO:0000255" key="1">
    <source>
        <dbReference type="HAMAP-Rule" id="MF_01389"/>
    </source>
</evidence>
<organism>
    <name type="scientific">Brucella canis (strain ATCC 23365 / NCTC 10854 / RM-666)</name>
    <dbReference type="NCBI Taxonomy" id="483179"/>
    <lineage>
        <taxon>Bacteria</taxon>
        <taxon>Pseudomonadati</taxon>
        <taxon>Pseudomonadota</taxon>
        <taxon>Alphaproteobacteria</taxon>
        <taxon>Hyphomicrobiales</taxon>
        <taxon>Brucellaceae</taxon>
        <taxon>Brucella/Ochrobactrum group</taxon>
        <taxon>Brucella</taxon>
    </lineage>
</organism>
<feature type="chain" id="PRO_0000347357" description="Urease accessory protein UreG 2">
    <location>
        <begin position="1"/>
        <end position="212"/>
    </location>
</feature>
<feature type="binding site" evidence="1">
    <location>
        <begin position="11"/>
        <end position="18"/>
    </location>
    <ligand>
        <name>GTP</name>
        <dbReference type="ChEBI" id="CHEBI:37565"/>
    </ligand>
</feature>
<comment type="function">
    <text evidence="1">Facilitates the functional incorporation of the urease nickel metallocenter. This process requires GTP hydrolysis, probably effectuated by UreG.</text>
</comment>
<comment type="subunit">
    <text evidence="1">Homodimer. UreD, UreF and UreG form a complex that acts as a GTP-hydrolysis-dependent molecular chaperone, activating the urease apoprotein by helping to assemble the nickel containing metallocenter of UreC. The UreE protein probably delivers the nickel.</text>
</comment>
<comment type="subcellular location">
    <subcellularLocation>
        <location evidence="1">Cytoplasm</location>
    </subcellularLocation>
</comment>
<comment type="similarity">
    <text evidence="1">Belongs to the SIMIBI class G3E GTPase family. UreG subfamily.</text>
</comment>
<proteinExistence type="inferred from homology"/>
<gene>
    <name evidence="1" type="primary">ureG2</name>
    <name type="ordered locus">BCAN_A1388</name>
</gene>